<reference key="1">
    <citation type="journal article" date="2002" name="J. Gen. Virol.">
        <title>Common evolutionary origin of aquareoviruses and orthoreoviruses revealed by genome characterization of Golden shiner reovirus, Grass carp reovirus, Striped bass reovirus and golden ide reovirus (genus Aquareovirus, family Reoviridae).</title>
        <authorList>
            <person name="Attoui H."/>
            <person name="Fang Q."/>
            <person name="Mohd Jaafar F."/>
            <person name="Cantaloube J.F."/>
            <person name="Biagini P."/>
            <person name="de Micco P."/>
            <person name="de Lamballerie X."/>
        </authorList>
    </citation>
    <scope>NUCLEOTIDE SEQUENCE [GENOMIC RNA]</scope>
</reference>
<sequence>MPLHMIPQVAHAMVRAAATGRLTLYTKTRTETTNLDHAEYVTCGRYTICAFCLTTLAPHANVKTIQDSHACSRQPNEAIRSLVEVSDKAQIALVGSRTVDYHELDVKAGFVAPTADETVAPSKDIVELPFRTCDLDDSSATACVRNHCQAGHDGVTHLPILSGDFKLPNEHPTKPLDDTHPHDKVLTRCPKTGLLLVHDTHAHATAVVATAATRAILMHDLLTSANVDDGHQARSACYGPTFSNLTFACHSTCASDMAHFDCGQIVGIDLHVEPSD</sequence>
<organismHost>
    <name type="scientific">Notemigonus crysoleucas</name>
    <name type="common">Golden shiner</name>
    <name type="synonym">Cyprinus crysoleucas</name>
    <dbReference type="NCBI Taxonomy" id="28800"/>
</organismHost>
<organismHost>
    <name type="scientific">Pimephales promelas</name>
    <name type="common">Fathead minnow</name>
    <dbReference type="NCBI Taxonomy" id="90988"/>
</organismHost>
<gene>
    <name type="primary">S10</name>
</gene>
<proteinExistence type="inferred from homology"/>
<name>VP7_AQRVC</name>
<protein>
    <recommendedName>
        <fullName>Outer capsid protein VP7</fullName>
    </recommendedName>
</protein>
<keyword id="KW-0167">Capsid protein</keyword>
<keyword id="KW-1152">Outer capsid protein</keyword>
<keyword id="KW-1185">Reference proteome</keyword>
<keyword id="KW-1146">T=13 icosahedral capsid protein</keyword>
<keyword id="KW-0946">Virion</keyword>
<organism>
    <name type="scientific">Aquareovirus C (isolate Golden shiner/USA/GSRV/1977)</name>
    <name type="common">AQRV-C</name>
    <dbReference type="NCBI Taxonomy" id="185783"/>
    <lineage>
        <taxon>Viruses</taxon>
        <taxon>Riboviria</taxon>
        <taxon>Orthornavirae</taxon>
        <taxon>Duplornaviricota</taxon>
        <taxon>Resentoviricetes</taxon>
        <taxon>Reovirales</taxon>
        <taxon>Spinareoviridae</taxon>
        <taxon>Aquareovirus</taxon>
        <taxon>Aquareovirus ctenopharyngodontis</taxon>
    </lineage>
</organism>
<evidence type="ECO:0000250" key="1"/>
<evidence type="ECO:0000305" key="2"/>
<feature type="chain" id="PRO_0000404193" description="Outer capsid protein VP7">
    <location>
        <begin position="1"/>
        <end position="276"/>
    </location>
</feature>
<comment type="function">
    <text evidence="1">Interacts with VP4 to form the outer icosahedral capsid with an incomplete T=13 symmetry, about 80 nm in diameter, and consisting of 200 VP4-VP7 trimers.</text>
</comment>
<comment type="subunit">
    <text evidence="1">Interacts with VP4 and VP6.</text>
</comment>
<comment type="subcellular location">
    <subcellularLocation>
        <location evidence="2">Virion</location>
    </subcellularLocation>
</comment>
<comment type="similarity">
    <text evidence="2">Belongs to the aquareoviridae outer capsid VP7 protein family.</text>
</comment>
<dbReference type="EMBL" id="AF403407">
    <property type="protein sequence ID" value="AAM92754.1"/>
    <property type="molecule type" value="Genomic_RNA"/>
</dbReference>
<dbReference type="RefSeq" id="NP_938070.1">
    <property type="nucleotide sequence ID" value="NC_005175.1"/>
</dbReference>
<dbReference type="SMR" id="Q8JU53"/>
<dbReference type="KEGG" id="vg:2648339"/>
<dbReference type="Proteomes" id="UP000006713">
    <property type="component" value="Genome"/>
</dbReference>
<dbReference type="GO" id="GO:0039621">
    <property type="term" value="C:T=13 icosahedral viral capsid"/>
    <property type="evidence" value="ECO:0007669"/>
    <property type="project" value="UniProtKB-KW"/>
</dbReference>
<dbReference type="GO" id="GO:0039624">
    <property type="term" value="C:viral outer capsid"/>
    <property type="evidence" value="ECO:0007669"/>
    <property type="project" value="UniProtKB-KW"/>
</dbReference>
<dbReference type="InterPro" id="IPR031413">
    <property type="entry name" value="Capsid_VP7"/>
</dbReference>
<dbReference type="Pfam" id="PF17071">
    <property type="entry name" value="Capsid_VP7"/>
    <property type="match status" value="1"/>
</dbReference>
<accession>Q8JU53</accession>